<sequence>MPKKDALDHLSLGQHTDYPNEYDPKQLQPVPRSLNREPIGLKDKLPFSGVDLWTGYEISWLNANGLPQVAVGYFAVPAESPNLIESKSFKLYLNSFNDSRFDTWEYVQQLMETDLSACAGTPVKVKLKQLSELEGESVATFPGHCIDDQNISISHYDYQPSLLATEQHETEEALHSHLLKSNCLITNQPDWGSVYIHYQGPKLDRAALLAYLVSFRRHNEFHEQCVERIYQDLKALGMKKLTVYARYTRRGGLDINPFRSDFEPALQMQRMARQ</sequence>
<dbReference type="EC" id="1.7.1.13" evidence="1"/>
<dbReference type="EMBL" id="AE017340">
    <property type="protein sequence ID" value="AAV81695.1"/>
    <property type="molecule type" value="Genomic_DNA"/>
</dbReference>
<dbReference type="RefSeq" id="WP_011234106.1">
    <property type="nucleotide sequence ID" value="NC_006512.1"/>
</dbReference>
<dbReference type="SMR" id="Q5QW08"/>
<dbReference type="STRING" id="283942.IL0855"/>
<dbReference type="GeneID" id="41336011"/>
<dbReference type="KEGG" id="ilo:IL0855"/>
<dbReference type="eggNOG" id="COG0780">
    <property type="taxonomic scope" value="Bacteria"/>
</dbReference>
<dbReference type="eggNOG" id="COG2904">
    <property type="taxonomic scope" value="Bacteria"/>
</dbReference>
<dbReference type="HOGENOM" id="CLU_054738_0_0_6"/>
<dbReference type="OrthoDB" id="9789995at2"/>
<dbReference type="UniPathway" id="UPA00392"/>
<dbReference type="Proteomes" id="UP000001171">
    <property type="component" value="Chromosome"/>
</dbReference>
<dbReference type="GO" id="GO:0005737">
    <property type="term" value="C:cytoplasm"/>
    <property type="evidence" value="ECO:0007669"/>
    <property type="project" value="UniProtKB-SubCell"/>
</dbReference>
<dbReference type="GO" id="GO:0033739">
    <property type="term" value="F:preQ1 synthase activity"/>
    <property type="evidence" value="ECO:0007669"/>
    <property type="project" value="UniProtKB-UniRule"/>
</dbReference>
<dbReference type="GO" id="GO:0008616">
    <property type="term" value="P:queuosine biosynthetic process"/>
    <property type="evidence" value="ECO:0007669"/>
    <property type="project" value="UniProtKB-UniRule"/>
</dbReference>
<dbReference type="GO" id="GO:0006400">
    <property type="term" value="P:tRNA modification"/>
    <property type="evidence" value="ECO:0007669"/>
    <property type="project" value="UniProtKB-UniRule"/>
</dbReference>
<dbReference type="Gene3D" id="3.30.1130.10">
    <property type="match status" value="2"/>
</dbReference>
<dbReference type="HAMAP" id="MF_00817">
    <property type="entry name" value="QueF_type2"/>
    <property type="match status" value="1"/>
</dbReference>
<dbReference type="InterPro" id="IPR043133">
    <property type="entry name" value="GTP-CH-I_C/QueF"/>
</dbReference>
<dbReference type="InterPro" id="IPR050084">
    <property type="entry name" value="NADPH_dep_7-cyano-7-deazaG_red"/>
</dbReference>
<dbReference type="InterPro" id="IPR029500">
    <property type="entry name" value="QueF"/>
</dbReference>
<dbReference type="InterPro" id="IPR029139">
    <property type="entry name" value="QueF_N"/>
</dbReference>
<dbReference type="InterPro" id="IPR016428">
    <property type="entry name" value="QueF_type2"/>
</dbReference>
<dbReference type="NCBIfam" id="TIGR03138">
    <property type="entry name" value="QueF"/>
    <property type="match status" value="1"/>
</dbReference>
<dbReference type="PANTHER" id="PTHR34354">
    <property type="entry name" value="NADPH-DEPENDENT 7-CYANO-7-DEAZAGUANINE REDUCTASE"/>
    <property type="match status" value="1"/>
</dbReference>
<dbReference type="PANTHER" id="PTHR34354:SF1">
    <property type="entry name" value="NADPH-DEPENDENT 7-CYANO-7-DEAZAGUANINE REDUCTASE"/>
    <property type="match status" value="1"/>
</dbReference>
<dbReference type="Pfam" id="PF14489">
    <property type="entry name" value="QueF"/>
    <property type="match status" value="1"/>
</dbReference>
<dbReference type="Pfam" id="PF14819">
    <property type="entry name" value="QueF_N"/>
    <property type="match status" value="1"/>
</dbReference>
<dbReference type="PIRSF" id="PIRSF004750">
    <property type="entry name" value="Nitrile_oxidored_YqcD_prd"/>
    <property type="match status" value="1"/>
</dbReference>
<dbReference type="SUPFAM" id="SSF55620">
    <property type="entry name" value="Tetrahydrobiopterin biosynthesis enzymes-like"/>
    <property type="match status" value="1"/>
</dbReference>
<name>QUEF_IDILO</name>
<keyword id="KW-0963">Cytoplasm</keyword>
<keyword id="KW-0521">NADP</keyword>
<keyword id="KW-0560">Oxidoreductase</keyword>
<keyword id="KW-0671">Queuosine biosynthesis</keyword>
<keyword id="KW-1185">Reference proteome</keyword>
<reference key="1">
    <citation type="journal article" date="2004" name="Proc. Natl. Acad. Sci. U.S.A.">
        <title>Genome sequence of the deep-sea gamma-proteobacterium Idiomarina loihiensis reveals amino acid fermentation as a source of carbon and energy.</title>
        <authorList>
            <person name="Hou S."/>
            <person name="Saw J.H."/>
            <person name="Lee K.S."/>
            <person name="Freitas T.A."/>
            <person name="Belisle C."/>
            <person name="Kawarabayasi Y."/>
            <person name="Donachie S.P."/>
            <person name="Pikina A."/>
            <person name="Galperin M.Y."/>
            <person name="Koonin E.V."/>
            <person name="Makarova K.S."/>
            <person name="Omelchenko M.V."/>
            <person name="Sorokin A."/>
            <person name="Wolf Y.I."/>
            <person name="Li Q.X."/>
            <person name="Keum Y.S."/>
            <person name="Campbell S."/>
            <person name="Denery J."/>
            <person name="Aizawa S."/>
            <person name="Shibata S."/>
            <person name="Malahoff A."/>
            <person name="Alam M."/>
        </authorList>
    </citation>
    <scope>NUCLEOTIDE SEQUENCE [LARGE SCALE GENOMIC DNA]</scope>
    <source>
        <strain>ATCC BAA-735 / DSM 15497 / L2-TR</strain>
    </source>
</reference>
<evidence type="ECO:0000255" key="1">
    <source>
        <dbReference type="HAMAP-Rule" id="MF_00817"/>
    </source>
</evidence>
<evidence type="ECO:0000256" key="2">
    <source>
        <dbReference type="SAM" id="MobiDB-lite"/>
    </source>
</evidence>
<protein>
    <recommendedName>
        <fullName evidence="1">NADPH-dependent 7-cyano-7-deazaguanine reductase</fullName>
        <ecNumber evidence="1">1.7.1.13</ecNumber>
    </recommendedName>
    <alternativeName>
        <fullName evidence="1">7-cyano-7-carbaguanine reductase</fullName>
    </alternativeName>
    <alternativeName>
        <fullName evidence="1">NADPH-dependent nitrile oxidoreductase</fullName>
    </alternativeName>
    <alternativeName>
        <fullName evidence="1">PreQ(0) reductase</fullName>
    </alternativeName>
</protein>
<feature type="chain" id="PRO_0000163037" description="NADPH-dependent 7-cyano-7-deazaguanine reductase">
    <location>
        <begin position="1"/>
        <end position="274"/>
    </location>
</feature>
<feature type="region of interest" description="Disordered" evidence="2">
    <location>
        <begin position="1"/>
        <end position="33"/>
    </location>
</feature>
<feature type="active site" description="Thioimide intermediate" evidence="1">
    <location>
        <position position="183"/>
    </location>
</feature>
<feature type="active site" description="Proton donor" evidence="1">
    <location>
        <position position="190"/>
    </location>
</feature>
<feature type="binding site" evidence="1">
    <location>
        <begin position="84"/>
        <end position="86"/>
    </location>
    <ligand>
        <name>substrate</name>
    </ligand>
</feature>
<feature type="binding site" evidence="1">
    <location>
        <begin position="86"/>
        <end position="87"/>
    </location>
    <ligand>
        <name>NADPH</name>
        <dbReference type="ChEBI" id="CHEBI:57783"/>
    </ligand>
</feature>
<feature type="binding site" evidence="1">
    <location>
        <begin position="222"/>
        <end position="223"/>
    </location>
    <ligand>
        <name>substrate</name>
    </ligand>
</feature>
<feature type="binding site" evidence="1">
    <location>
        <begin position="250"/>
        <end position="251"/>
    </location>
    <ligand>
        <name>NADPH</name>
        <dbReference type="ChEBI" id="CHEBI:57783"/>
    </ligand>
</feature>
<accession>Q5QW08</accession>
<organism>
    <name type="scientific">Idiomarina loihiensis (strain ATCC BAA-735 / DSM 15497 / L2-TR)</name>
    <dbReference type="NCBI Taxonomy" id="283942"/>
    <lineage>
        <taxon>Bacteria</taxon>
        <taxon>Pseudomonadati</taxon>
        <taxon>Pseudomonadota</taxon>
        <taxon>Gammaproteobacteria</taxon>
        <taxon>Alteromonadales</taxon>
        <taxon>Idiomarinaceae</taxon>
        <taxon>Idiomarina</taxon>
    </lineage>
</organism>
<comment type="function">
    <text evidence="1">Catalyzes the NADPH-dependent reduction of 7-cyano-7-deazaguanine (preQ0) to 7-aminomethyl-7-deazaguanine (preQ1).</text>
</comment>
<comment type="catalytic activity">
    <reaction evidence="1">
        <text>7-aminomethyl-7-carbaguanine + 2 NADP(+) = 7-cyano-7-deazaguanine + 2 NADPH + 3 H(+)</text>
        <dbReference type="Rhea" id="RHEA:13409"/>
        <dbReference type="ChEBI" id="CHEBI:15378"/>
        <dbReference type="ChEBI" id="CHEBI:45075"/>
        <dbReference type="ChEBI" id="CHEBI:57783"/>
        <dbReference type="ChEBI" id="CHEBI:58349"/>
        <dbReference type="ChEBI" id="CHEBI:58703"/>
        <dbReference type="EC" id="1.7.1.13"/>
    </reaction>
</comment>
<comment type="pathway">
    <text evidence="1">tRNA modification; tRNA-queuosine biosynthesis.</text>
</comment>
<comment type="subunit">
    <text evidence="1">Homodimer.</text>
</comment>
<comment type="subcellular location">
    <subcellularLocation>
        <location evidence="1">Cytoplasm</location>
    </subcellularLocation>
</comment>
<comment type="similarity">
    <text evidence="1">Belongs to the GTP cyclohydrolase I family. QueF type 2 subfamily.</text>
</comment>
<proteinExistence type="inferred from homology"/>
<gene>
    <name evidence="1" type="primary">queF</name>
    <name type="ordered locus">IL0855</name>
</gene>